<name>RS2_LEUCK</name>
<comment type="similarity">
    <text evidence="1">Belongs to the universal ribosomal protein uS2 family.</text>
</comment>
<comment type="sequence caution" evidence="2">
    <conflict type="erroneous initiation">
        <sequence resource="EMBL-CDS" id="ACA82817"/>
    </conflict>
</comment>
<feature type="chain" id="PRO_0000352003" description="Small ribosomal subunit protein uS2">
    <location>
        <begin position="1"/>
        <end position="258"/>
    </location>
</feature>
<proteinExistence type="inferred from homology"/>
<keyword id="KW-1185">Reference proteome</keyword>
<keyword id="KW-0687">Ribonucleoprotein</keyword>
<keyword id="KW-0689">Ribosomal protein</keyword>
<protein>
    <recommendedName>
        <fullName evidence="1">Small ribosomal subunit protein uS2</fullName>
    </recommendedName>
    <alternativeName>
        <fullName evidence="2">30S ribosomal protein S2</fullName>
    </alternativeName>
</protein>
<dbReference type="EMBL" id="DQ489736">
    <property type="protein sequence ID" value="ACA82817.1"/>
    <property type="status" value="ALT_INIT"/>
    <property type="molecule type" value="Genomic_DNA"/>
</dbReference>
<dbReference type="RefSeq" id="WP_004900710.1">
    <property type="nucleotide sequence ID" value="NC_010471.1"/>
</dbReference>
<dbReference type="SMR" id="B1MZ65"/>
<dbReference type="STRING" id="349519.LCK_00990"/>
<dbReference type="GeneID" id="61102017"/>
<dbReference type="KEGG" id="lci:LCK_00990"/>
<dbReference type="eggNOG" id="COG0052">
    <property type="taxonomic scope" value="Bacteria"/>
</dbReference>
<dbReference type="HOGENOM" id="CLU_040318_1_2_9"/>
<dbReference type="OrthoDB" id="9808036at2"/>
<dbReference type="Proteomes" id="UP000002166">
    <property type="component" value="Chromosome"/>
</dbReference>
<dbReference type="GO" id="GO:0022627">
    <property type="term" value="C:cytosolic small ribosomal subunit"/>
    <property type="evidence" value="ECO:0007669"/>
    <property type="project" value="TreeGrafter"/>
</dbReference>
<dbReference type="GO" id="GO:0003735">
    <property type="term" value="F:structural constituent of ribosome"/>
    <property type="evidence" value="ECO:0007669"/>
    <property type="project" value="InterPro"/>
</dbReference>
<dbReference type="GO" id="GO:0006412">
    <property type="term" value="P:translation"/>
    <property type="evidence" value="ECO:0007669"/>
    <property type="project" value="UniProtKB-UniRule"/>
</dbReference>
<dbReference type="CDD" id="cd01425">
    <property type="entry name" value="RPS2"/>
    <property type="match status" value="1"/>
</dbReference>
<dbReference type="FunFam" id="1.10.287.610:FF:000001">
    <property type="entry name" value="30S ribosomal protein S2"/>
    <property type="match status" value="1"/>
</dbReference>
<dbReference type="Gene3D" id="3.40.50.10490">
    <property type="entry name" value="Glucose-6-phosphate isomerase like protein, domain 1"/>
    <property type="match status" value="1"/>
</dbReference>
<dbReference type="Gene3D" id="1.10.287.610">
    <property type="entry name" value="Helix hairpin bin"/>
    <property type="match status" value="1"/>
</dbReference>
<dbReference type="HAMAP" id="MF_00291_B">
    <property type="entry name" value="Ribosomal_uS2_B"/>
    <property type="match status" value="1"/>
</dbReference>
<dbReference type="InterPro" id="IPR001865">
    <property type="entry name" value="Ribosomal_uS2"/>
</dbReference>
<dbReference type="InterPro" id="IPR005706">
    <property type="entry name" value="Ribosomal_uS2_bac/mit/plastid"/>
</dbReference>
<dbReference type="InterPro" id="IPR018130">
    <property type="entry name" value="Ribosomal_uS2_CS"/>
</dbReference>
<dbReference type="InterPro" id="IPR023591">
    <property type="entry name" value="Ribosomal_uS2_flav_dom_sf"/>
</dbReference>
<dbReference type="NCBIfam" id="TIGR01011">
    <property type="entry name" value="rpsB_bact"/>
    <property type="match status" value="1"/>
</dbReference>
<dbReference type="PANTHER" id="PTHR12534">
    <property type="entry name" value="30S RIBOSOMAL PROTEIN S2 PROKARYOTIC AND ORGANELLAR"/>
    <property type="match status" value="1"/>
</dbReference>
<dbReference type="PANTHER" id="PTHR12534:SF0">
    <property type="entry name" value="SMALL RIBOSOMAL SUBUNIT PROTEIN US2M"/>
    <property type="match status" value="1"/>
</dbReference>
<dbReference type="Pfam" id="PF00318">
    <property type="entry name" value="Ribosomal_S2"/>
    <property type="match status" value="1"/>
</dbReference>
<dbReference type="PRINTS" id="PR00395">
    <property type="entry name" value="RIBOSOMALS2"/>
</dbReference>
<dbReference type="SUPFAM" id="SSF52313">
    <property type="entry name" value="Ribosomal protein S2"/>
    <property type="match status" value="1"/>
</dbReference>
<dbReference type="PROSITE" id="PS00962">
    <property type="entry name" value="RIBOSOMAL_S2_1"/>
    <property type="match status" value="1"/>
</dbReference>
<dbReference type="PROSITE" id="PS00963">
    <property type="entry name" value="RIBOSOMAL_S2_2"/>
    <property type="match status" value="1"/>
</dbReference>
<sequence>MAVISMKELLEAGVHFGHQTRRWDPKMDEYIFTERNGIHIIDLQKTVKLVDEAYNFMRNASTDGANFLFVGTKKQASDAIAEEAARAGQYFINHRWLGGTLTNWNTIKTRIQRLKDLEAMAEDGTFEQLPKKEVVLLNKQREKLNKFLGGIKDMPGLPDVLFVVDPKKEEIAVKEANMLNIPVVAMIDTNANPEVVDVKIPANDDAIRAVRLITAKMADAIIEGRQGQDSAPEDAFVAGDENTESIEEIANIVEEGNN</sequence>
<evidence type="ECO:0000255" key="1">
    <source>
        <dbReference type="HAMAP-Rule" id="MF_00291"/>
    </source>
</evidence>
<evidence type="ECO:0000305" key="2"/>
<reference key="1">
    <citation type="journal article" date="2008" name="J. Bacteriol.">
        <title>Complete genome sequence of Leuconostoc citreum KM20.</title>
        <authorList>
            <person name="Kim J.F."/>
            <person name="Jeong H."/>
            <person name="Lee J.-S."/>
            <person name="Choi S.-H."/>
            <person name="Ha M."/>
            <person name="Hur C.-G."/>
            <person name="Kim J.-S."/>
            <person name="Lee S."/>
            <person name="Park H.-S."/>
            <person name="Park Y.-H."/>
            <person name="Oh T.K."/>
        </authorList>
    </citation>
    <scope>NUCLEOTIDE SEQUENCE [LARGE SCALE GENOMIC DNA]</scope>
    <source>
        <strain>KM20</strain>
    </source>
</reference>
<gene>
    <name evidence="1" type="primary">rpsB</name>
    <name type="ordered locus">LCK_00990</name>
</gene>
<accession>B1MZ65</accession>
<organism>
    <name type="scientific">Leuconostoc citreum (strain KM20)</name>
    <dbReference type="NCBI Taxonomy" id="349519"/>
    <lineage>
        <taxon>Bacteria</taxon>
        <taxon>Bacillati</taxon>
        <taxon>Bacillota</taxon>
        <taxon>Bacilli</taxon>
        <taxon>Lactobacillales</taxon>
        <taxon>Lactobacillaceae</taxon>
        <taxon>Leuconostoc</taxon>
    </lineage>
</organism>